<accession>B5FB55</accession>
<evidence type="ECO:0000255" key="1">
    <source>
        <dbReference type="HAMAP-Rule" id="MF_01366"/>
    </source>
</evidence>
<evidence type="ECO:0000305" key="2"/>
<organism>
    <name type="scientific">Aliivibrio fischeri (strain MJ11)</name>
    <name type="common">Vibrio fischeri</name>
    <dbReference type="NCBI Taxonomy" id="388396"/>
    <lineage>
        <taxon>Bacteria</taxon>
        <taxon>Pseudomonadati</taxon>
        <taxon>Pseudomonadota</taxon>
        <taxon>Gammaproteobacteria</taxon>
        <taxon>Vibrionales</taxon>
        <taxon>Vibrionaceae</taxon>
        <taxon>Aliivibrio</taxon>
    </lineage>
</organism>
<dbReference type="EMBL" id="CP001139">
    <property type="protein sequence ID" value="ACH65603.1"/>
    <property type="molecule type" value="Genomic_DNA"/>
</dbReference>
<dbReference type="RefSeq" id="WP_005420958.1">
    <property type="nucleotide sequence ID" value="NC_011184.1"/>
</dbReference>
<dbReference type="SMR" id="B5FB55"/>
<dbReference type="GeneID" id="54164938"/>
<dbReference type="KEGG" id="vfm:VFMJ11_2333"/>
<dbReference type="HOGENOM" id="CLU_082184_2_2_6"/>
<dbReference type="Proteomes" id="UP000001857">
    <property type="component" value="Chromosome I"/>
</dbReference>
<dbReference type="GO" id="GO:0022625">
    <property type="term" value="C:cytosolic large ribosomal subunit"/>
    <property type="evidence" value="ECO:0007669"/>
    <property type="project" value="TreeGrafter"/>
</dbReference>
<dbReference type="GO" id="GO:0003729">
    <property type="term" value="F:mRNA binding"/>
    <property type="evidence" value="ECO:0007669"/>
    <property type="project" value="TreeGrafter"/>
</dbReference>
<dbReference type="GO" id="GO:0003735">
    <property type="term" value="F:structural constituent of ribosome"/>
    <property type="evidence" value="ECO:0007669"/>
    <property type="project" value="InterPro"/>
</dbReference>
<dbReference type="GO" id="GO:0017148">
    <property type="term" value="P:negative regulation of translation"/>
    <property type="evidence" value="ECO:0007669"/>
    <property type="project" value="TreeGrafter"/>
</dbReference>
<dbReference type="GO" id="GO:0006412">
    <property type="term" value="P:translation"/>
    <property type="evidence" value="ECO:0007669"/>
    <property type="project" value="UniProtKB-UniRule"/>
</dbReference>
<dbReference type="CDD" id="cd00392">
    <property type="entry name" value="Ribosomal_L13"/>
    <property type="match status" value="1"/>
</dbReference>
<dbReference type="FunFam" id="3.90.1180.10:FF:000001">
    <property type="entry name" value="50S ribosomal protein L13"/>
    <property type="match status" value="1"/>
</dbReference>
<dbReference type="Gene3D" id="3.90.1180.10">
    <property type="entry name" value="Ribosomal protein L13"/>
    <property type="match status" value="1"/>
</dbReference>
<dbReference type="HAMAP" id="MF_01366">
    <property type="entry name" value="Ribosomal_uL13"/>
    <property type="match status" value="1"/>
</dbReference>
<dbReference type="InterPro" id="IPR005822">
    <property type="entry name" value="Ribosomal_uL13"/>
</dbReference>
<dbReference type="InterPro" id="IPR005823">
    <property type="entry name" value="Ribosomal_uL13_bac-type"/>
</dbReference>
<dbReference type="InterPro" id="IPR023563">
    <property type="entry name" value="Ribosomal_uL13_CS"/>
</dbReference>
<dbReference type="InterPro" id="IPR036899">
    <property type="entry name" value="Ribosomal_uL13_sf"/>
</dbReference>
<dbReference type="NCBIfam" id="TIGR01066">
    <property type="entry name" value="rplM_bact"/>
    <property type="match status" value="1"/>
</dbReference>
<dbReference type="PANTHER" id="PTHR11545:SF2">
    <property type="entry name" value="LARGE RIBOSOMAL SUBUNIT PROTEIN UL13M"/>
    <property type="match status" value="1"/>
</dbReference>
<dbReference type="PANTHER" id="PTHR11545">
    <property type="entry name" value="RIBOSOMAL PROTEIN L13"/>
    <property type="match status" value="1"/>
</dbReference>
<dbReference type="Pfam" id="PF00572">
    <property type="entry name" value="Ribosomal_L13"/>
    <property type="match status" value="1"/>
</dbReference>
<dbReference type="PIRSF" id="PIRSF002181">
    <property type="entry name" value="Ribosomal_L13"/>
    <property type="match status" value="1"/>
</dbReference>
<dbReference type="SUPFAM" id="SSF52161">
    <property type="entry name" value="Ribosomal protein L13"/>
    <property type="match status" value="1"/>
</dbReference>
<dbReference type="PROSITE" id="PS00783">
    <property type="entry name" value="RIBOSOMAL_L13"/>
    <property type="match status" value="1"/>
</dbReference>
<protein>
    <recommendedName>
        <fullName evidence="1">Large ribosomal subunit protein uL13</fullName>
    </recommendedName>
    <alternativeName>
        <fullName evidence="2">50S ribosomal protein L13</fullName>
    </alternativeName>
</protein>
<feature type="chain" id="PRO_1000144195" description="Large ribosomal subunit protein uL13">
    <location>
        <begin position="1"/>
        <end position="142"/>
    </location>
</feature>
<sequence>MKTFVAKPAAVKRDWYVVDAEGKTLGRIATEIASRLRGKHKAEYTPHVDTGDYIIVINAEKVRVTGKKASDKIYYRHSEFPGGLKSISFEKLIDRKPEMVIELAVKGMLPRGPLGRAMYRKLKVYAGAEHNHTAQQPQVLDI</sequence>
<gene>
    <name evidence="1" type="primary">rplM</name>
    <name type="ordered locus">VFMJ11_2333</name>
</gene>
<reference key="1">
    <citation type="submission" date="2008-08" db="EMBL/GenBank/DDBJ databases">
        <title>Complete sequence of Vibrio fischeri strain MJ11.</title>
        <authorList>
            <person name="Mandel M.J."/>
            <person name="Stabb E.V."/>
            <person name="Ruby E.G."/>
            <person name="Ferriera S."/>
            <person name="Johnson J."/>
            <person name="Kravitz S."/>
            <person name="Beeson K."/>
            <person name="Sutton G."/>
            <person name="Rogers Y.-H."/>
            <person name="Friedman R."/>
            <person name="Frazier M."/>
            <person name="Venter J.C."/>
        </authorList>
    </citation>
    <scope>NUCLEOTIDE SEQUENCE [LARGE SCALE GENOMIC DNA]</scope>
    <source>
        <strain>MJ11</strain>
    </source>
</reference>
<name>RL13_ALIFM</name>
<keyword id="KW-0687">Ribonucleoprotein</keyword>
<keyword id="KW-0689">Ribosomal protein</keyword>
<comment type="function">
    <text evidence="1">This protein is one of the early assembly proteins of the 50S ribosomal subunit, although it is not seen to bind rRNA by itself. It is important during the early stages of 50S assembly.</text>
</comment>
<comment type="subunit">
    <text evidence="1">Part of the 50S ribosomal subunit.</text>
</comment>
<comment type="similarity">
    <text evidence="1">Belongs to the universal ribosomal protein uL13 family.</text>
</comment>
<proteinExistence type="inferred from homology"/>